<proteinExistence type="inferred from homology"/>
<protein>
    <recommendedName>
        <fullName evidence="1">Multidrug resistance protein MdtH</fullName>
    </recommendedName>
</protein>
<feature type="chain" id="PRO_0000173343" description="Multidrug resistance protein MdtH">
    <location>
        <begin position="1"/>
        <end position="402"/>
    </location>
</feature>
<feature type="topological domain" description="Cytoplasmic" evidence="1">
    <location>
        <begin position="1"/>
        <end position="12"/>
    </location>
</feature>
<feature type="transmembrane region" description="Helical" evidence="1">
    <location>
        <begin position="13"/>
        <end position="33"/>
    </location>
</feature>
<feature type="topological domain" description="Periplasmic" evidence="1">
    <location>
        <begin position="34"/>
        <end position="98"/>
    </location>
</feature>
<feature type="transmembrane region" description="Helical" evidence="1">
    <location>
        <begin position="99"/>
        <end position="116"/>
    </location>
</feature>
<feature type="topological domain" description="Cytoplasmic" evidence="1">
    <location>
        <begin position="117"/>
        <end position="138"/>
    </location>
</feature>
<feature type="transmembrane region" description="Helical" evidence="1">
    <location>
        <begin position="139"/>
        <end position="159"/>
    </location>
</feature>
<feature type="topological domain" description="Periplasmic" evidence="1">
    <location>
        <begin position="160"/>
        <end position="164"/>
    </location>
</feature>
<feature type="transmembrane region" description="Helical" evidence="1">
    <location>
        <begin position="165"/>
        <end position="185"/>
    </location>
</feature>
<feature type="topological domain" description="Cytoplasmic" evidence="1">
    <location>
        <begin position="186"/>
        <end position="213"/>
    </location>
</feature>
<feature type="transmembrane region" description="Helical" evidence="1">
    <location>
        <begin position="214"/>
        <end position="234"/>
    </location>
</feature>
<feature type="topological domain" description="Periplasmic" evidence="1">
    <location>
        <begin position="235"/>
        <end position="243"/>
    </location>
</feature>
<feature type="transmembrane region" description="Helical" evidence="1">
    <location>
        <begin position="244"/>
        <end position="264"/>
    </location>
</feature>
<feature type="topological domain" description="Cytoplasmic" evidence="1">
    <location>
        <begin position="265"/>
        <end position="276"/>
    </location>
</feature>
<feature type="transmembrane region" description="Helical" evidence="1">
    <location>
        <begin position="277"/>
        <end position="297"/>
    </location>
</feature>
<feature type="topological domain" description="Periplasmic" evidence="1">
    <location>
        <begin position="298"/>
        <end position="299"/>
    </location>
</feature>
<feature type="transmembrane region" description="Helical" evidence="1">
    <location>
        <begin position="300"/>
        <end position="320"/>
    </location>
</feature>
<feature type="topological domain" description="Cytoplasmic" evidence="1">
    <location>
        <begin position="321"/>
        <end position="339"/>
    </location>
</feature>
<feature type="transmembrane region" description="Helical" evidence="1">
    <location>
        <begin position="340"/>
        <end position="360"/>
    </location>
</feature>
<feature type="topological domain" description="Periplasmic" evidence="1">
    <location>
        <begin position="361"/>
        <end position="367"/>
    </location>
</feature>
<feature type="transmembrane region" description="Helical" evidence="1">
    <location>
        <begin position="368"/>
        <end position="388"/>
    </location>
</feature>
<feature type="topological domain" description="Cytoplasmic" evidence="1">
    <location>
        <begin position="389"/>
        <end position="402"/>
    </location>
</feature>
<reference key="1">
    <citation type="journal article" date="2001" name="Nature">
        <title>Genome sequence of enterohaemorrhagic Escherichia coli O157:H7.</title>
        <authorList>
            <person name="Perna N.T."/>
            <person name="Plunkett G. III"/>
            <person name="Burland V."/>
            <person name="Mau B."/>
            <person name="Glasner J.D."/>
            <person name="Rose D.J."/>
            <person name="Mayhew G.F."/>
            <person name="Evans P.S."/>
            <person name="Gregor J."/>
            <person name="Kirkpatrick H.A."/>
            <person name="Posfai G."/>
            <person name="Hackett J."/>
            <person name="Klink S."/>
            <person name="Boutin A."/>
            <person name="Shao Y."/>
            <person name="Miller L."/>
            <person name="Grotbeck E.J."/>
            <person name="Davis N.W."/>
            <person name="Lim A."/>
            <person name="Dimalanta E.T."/>
            <person name="Potamousis K."/>
            <person name="Apodaca J."/>
            <person name="Anantharaman T.S."/>
            <person name="Lin J."/>
            <person name="Yen G."/>
            <person name="Schwartz D.C."/>
            <person name="Welch R.A."/>
            <person name="Blattner F.R."/>
        </authorList>
    </citation>
    <scope>NUCLEOTIDE SEQUENCE [LARGE SCALE GENOMIC DNA]</scope>
    <source>
        <strain>O157:H7 / EDL933 / ATCC 700927 / EHEC</strain>
    </source>
</reference>
<reference key="2">
    <citation type="journal article" date="2001" name="DNA Res.">
        <title>Complete genome sequence of enterohemorrhagic Escherichia coli O157:H7 and genomic comparison with a laboratory strain K-12.</title>
        <authorList>
            <person name="Hayashi T."/>
            <person name="Makino K."/>
            <person name="Ohnishi M."/>
            <person name="Kurokawa K."/>
            <person name="Ishii K."/>
            <person name="Yokoyama K."/>
            <person name="Han C.-G."/>
            <person name="Ohtsubo E."/>
            <person name="Nakayama K."/>
            <person name="Murata T."/>
            <person name="Tanaka M."/>
            <person name="Tobe T."/>
            <person name="Iida T."/>
            <person name="Takami H."/>
            <person name="Honda T."/>
            <person name="Sasakawa C."/>
            <person name="Ogasawara N."/>
            <person name="Yasunaga T."/>
            <person name="Kuhara S."/>
            <person name="Shiba T."/>
            <person name="Hattori M."/>
            <person name="Shinagawa H."/>
        </authorList>
    </citation>
    <scope>NUCLEOTIDE SEQUENCE [LARGE SCALE GENOMIC DNA]</scope>
    <source>
        <strain>O157:H7 / Sakai / RIMD 0509952 / EHEC</strain>
    </source>
</reference>
<gene>
    <name evidence="1" type="primary">mdtH</name>
    <name type="ordered locus">Z1702</name>
    <name type="ordered locus">ECs1443</name>
</gene>
<evidence type="ECO:0000255" key="1">
    <source>
        <dbReference type="HAMAP-Rule" id="MF_01529"/>
    </source>
</evidence>
<evidence type="ECO:0000305" key="2"/>
<name>MDTH_ECO57</name>
<accession>Q7AFA1</accession>
<accession>Q8X8N0</accession>
<keyword id="KW-0046">Antibiotic resistance</keyword>
<keyword id="KW-0997">Cell inner membrane</keyword>
<keyword id="KW-1003">Cell membrane</keyword>
<keyword id="KW-0472">Membrane</keyword>
<keyword id="KW-1185">Reference proteome</keyword>
<keyword id="KW-0812">Transmembrane</keyword>
<keyword id="KW-1133">Transmembrane helix</keyword>
<keyword id="KW-0813">Transport</keyword>
<dbReference type="EMBL" id="AE005174">
    <property type="protein sequence ID" value="AAG55811.1"/>
    <property type="status" value="ALT_INIT"/>
    <property type="molecule type" value="Genomic_DNA"/>
</dbReference>
<dbReference type="EMBL" id="BA000007">
    <property type="protein sequence ID" value="BAB34866.2"/>
    <property type="molecule type" value="Genomic_DNA"/>
</dbReference>
<dbReference type="PIR" id="C99809">
    <property type="entry name" value="C99809"/>
</dbReference>
<dbReference type="PIR" id="G85668">
    <property type="entry name" value="G85668"/>
</dbReference>
<dbReference type="RefSeq" id="NP_309470.2">
    <property type="nucleotide sequence ID" value="NC_002695.1"/>
</dbReference>
<dbReference type="RefSeq" id="WP_000092209.1">
    <property type="nucleotide sequence ID" value="NZ_VOAI01000018.1"/>
</dbReference>
<dbReference type="SMR" id="Q7AFA1"/>
<dbReference type="STRING" id="155864.Z1702"/>
<dbReference type="GeneID" id="912474"/>
<dbReference type="KEGG" id="ece:Z1702"/>
<dbReference type="KEGG" id="ecs:ECs_1443"/>
<dbReference type="PATRIC" id="fig|386585.9.peg.1544"/>
<dbReference type="eggNOG" id="COG0477">
    <property type="taxonomic scope" value="Bacteria"/>
</dbReference>
<dbReference type="HOGENOM" id="CLU_001265_60_2_6"/>
<dbReference type="OMA" id="FSLNYWA"/>
<dbReference type="Proteomes" id="UP000000558">
    <property type="component" value="Chromosome"/>
</dbReference>
<dbReference type="Proteomes" id="UP000002519">
    <property type="component" value="Chromosome"/>
</dbReference>
<dbReference type="GO" id="GO:0005886">
    <property type="term" value="C:plasma membrane"/>
    <property type="evidence" value="ECO:0007669"/>
    <property type="project" value="UniProtKB-SubCell"/>
</dbReference>
<dbReference type="GO" id="GO:0022857">
    <property type="term" value="F:transmembrane transporter activity"/>
    <property type="evidence" value="ECO:0007669"/>
    <property type="project" value="UniProtKB-UniRule"/>
</dbReference>
<dbReference type="GO" id="GO:0046677">
    <property type="term" value="P:response to antibiotic"/>
    <property type="evidence" value="ECO:0007669"/>
    <property type="project" value="UniProtKB-KW"/>
</dbReference>
<dbReference type="CDD" id="cd17329">
    <property type="entry name" value="MFS_MdtH_MDR_like"/>
    <property type="match status" value="1"/>
</dbReference>
<dbReference type="FunFam" id="1.20.1250.20:FF:000039">
    <property type="entry name" value="Multidrug resistance protein MdtH"/>
    <property type="match status" value="1"/>
</dbReference>
<dbReference type="Gene3D" id="1.20.1250.20">
    <property type="entry name" value="MFS general substrate transporter like domains"/>
    <property type="match status" value="1"/>
</dbReference>
<dbReference type="HAMAP" id="MF_01529">
    <property type="entry name" value="MFS_MdtH"/>
    <property type="match status" value="1"/>
</dbReference>
<dbReference type="InterPro" id="IPR011701">
    <property type="entry name" value="MFS"/>
</dbReference>
<dbReference type="InterPro" id="IPR020846">
    <property type="entry name" value="MFS_dom"/>
</dbReference>
<dbReference type="InterPro" id="IPR036259">
    <property type="entry name" value="MFS_trans_sf"/>
</dbReference>
<dbReference type="InterPro" id="IPR050171">
    <property type="entry name" value="MFS_Transporters"/>
</dbReference>
<dbReference type="InterPro" id="IPR022855">
    <property type="entry name" value="Multidrug-R_MdtH"/>
</dbReference>
<dbReference type="NCBIfam" id="NF008650">
    <property type="entry name" value="PRK11646.1"/>
    <property type="match status" value="1"/>
</dbReference>
<dbReference type="PANTHER" id="PTHR23517:SF2">
    <property type="entry name" value="MULTIDRUG RESISTANCE PROTEIN MDTH"/>
    <property type="match status" value="1"/>
</dbReference>
<dbReference type="PANTHER" id="PTHR23517">
    <property type="entry name" value="RESISTANCE PROTEIN MDTM, PUTATIVE-RELATED-RELATED"/>
    <property type="match status" value="1"/>
</dbReference>
<dbReference type="Pfam" id="PF07690">
    <property type="entry name" value="MFS_1"/>
    <property type="match status" value="1"/>
</dbReference>
<dbReference type="SUPFAM" id="SSF103473">
    <property type="entry name" value="MFS general substrate transporter"/>
    <property type="match status" value="1"/>
</dbReference>
<dbReference type="PROSITE" id="PS50850">
    <property type="entry name" value="MFS"/>
    <property type="match status" value="1"/>
</dbReference>
<organism>
    <name type="scientific">Escherichia coli O157:H7</name>
    <dbReference type="NCBI Taxonomy" id="83334"/>
    <lineage>
        <taxon>Bacteria</taxon>
        <taxon>Pseudomonadati</taxon>
        <taxon>Pseudomonadota</taxon>
        <taxon>Gammaproteobacteria</taxon>
        <taxon>Enterobacterales</taxon>
        <taxon>Enterobacteriaceae</taxon>
        <taxon>Escherichia</taxon>
    </lineage>
</organism>
<comment type="function">
    <text evidence="1">Confers resistance to norfloxacin and enoxacin.</text>
</comment>
<comment type="subcellular location">
    <subcellularLocation>
        <location evidence="1">Cell inner membrane</location>
        <topology evidence="1">Multi-pass membrane protein</topology>
    </subcellularLocation>
</comment>
<comment type="similarity">
    <text evidence="1">Belongs to the major facilitator superfamily. DHA1 family. MdtH (TC 2.A.1.2.21) subfamily.</text>
</comment>
<comment type="sequence caution" evidence="2">
    <conflict type="erroneous initiation">
        <sequence resource="EMBL-CDS" id="AAG55811"/>
    </conflict>
    <text>Extended N-terminus.</text>
</comment>
<sequence length="402" mass="44391">MSRVSQARNLGKYFLLIDNMLVVLGFFVVFPLISIRFVDQMGWAAVMVGIALGLRQFIQQGLGIFGGAIADRFGAKPMIVTGMLMRAAGFATMGIAHEPWLLWFSCLLSGLGGTLFDPPRSALVVKLIRPQQRGRFFSLLMMQDSAGAVIGALLGSWLLQYDFRLVCATGAVLFVLCAAFNAWLLPAWKLSTVRTPVREGMTRVMRDKRFVTYVLTLAGYYMLAVQVMLMLPIMVNDVAGAPSAVKWMYAIEACLSLTLLYPIARWSEKHFRLEHRLMAGLLIMSLSMMPVGMVSGLQQLFTLICLFYIGSIIAEPARETLSASLADARARGSYMGFSRLGLAIGGAIGYIGGGWLFDLGKSVHQPELPWMMLGIIGIFTFLALGWQFSQKRAARRLLERDA</sequence>